<sequence>MPREKQKRGRRAEDKAKKDAAKRKRDEGPEESAVKRLKPSAETNTSNNEIISGADYIPLGQDDGGNDVPMNDAPANDMPFYGLLDSEEQEYFSKANEVLELNQFHDAEERRLFVDSVYREADGKELKVACSQSCSRLMEKLISLSDMRQIRRLFSKFIGHFLHLVQHRFASHCCETLFINAAPGVTEKISKSKGRKAEVDEEDEPEPELSLAEMFMKVVEELEGNWGYLLTERFASHTIRVLLFVLAGEPVDLSSTDSVVASRKKERLGIVNTEAPEEKAAAEKRKVPEVFEATLKKVMNDMVSGLDNTYLRALATHPVGNPVLQVLVFLELSHFGKASAKDPNSIIRRLIPDDDFGENAESSTFVRGLLYDPVGSRLLETIIKSMPGKLFKSLYKNIIRDRIGSLARNTTAGYVVLRTLERLGKDDLQDAMESIIPEIPGLIERSRLIVPKVLIERCLVRGVDTKPLSDALESAYDKDPAQRLEQMLKLEPAASEDDSEEKRKQTGNNQTAAAEKLHGSLLAQTMLTASGPVSGLIYSSLLAQSPDSLLRLAKDPTASRVLQQALTAPTSTSQFRRQFTTRFSGHLVELALDSSGSHVVDALWPATKDLFFVKERMAQELLNEELSLRDSFVGRAVWRNWSMDLYKRRRGEWASKAKGLDSIENGQRERPKSRIDLARAKFAAKAAEESSKAPVAAKT</sequence>
<organism>
    <name type="scientific">Aspergillus fumigatus (strain ATCC MYA-4609 / CBS 101355 / FGSC A1100 / Af293)</name>
    <name type="common">Neosartorya fumigata</name>
    <dbReference type="NCBI Taxonomy" id="330879"/>
    <lineage>
        <taxon>Eukaryota</taxon>
        <taxon>Fungi</taxon>
        <taxon>Dikarya</taxon>
        <taxon>Ascomycota</taxon>
        <taxon>Pezizomycotina</taxon>
        <taxon>Eurotiomycetes</taxon>
        <taxon>Eurotiomycetidae</taxon>
        <taxon>Eurotiales</taxon>
        <taxon>Aspergillaceae</taxon>
        <taxon>Aspergillus</taxon>
        <taxon>Aspergillus subgen. Fumigati</taxon>
    </lineage>
</organism>
<reference key="1">
    <citation type="journal article" date="2005" name="Nature">
        <title>Genomic sequence of the pathogenic and allergenic filamentous fungus Aspergillus fumigatus.</title>
        <authorList>
            <person name="Nierman W.C."/>
            <person name="Pain A."/>
            <person name="Anderson M.J."/>
            <person name="Wortman J.R."/>
            <person name="Kim H.S."/>
            <person name="Arroyo J."/>
            <person name="Berriman M."/>
            <person name="Abe K."/>
            <person name="Archer D.B."/>
            <person name="Bermejo C."/>
            <person name="Bennett J.W."/>
            <person name="Bowyer P."/>
            <person name="Chen D."/>
            <person name="Collins M."/>
            <person name="Coulsen R."/>
            <person name="Davies R."/>
            <person name="Dyer P.S."/>
            <person name="Farman M.L."/>
            <person name="Fedorova N."/>
            <person name="Fedorova N.D."/>
            <person name="Feldblyum T.V."/>
            <person name="Fischer R."/>
            <person name="Fosker N."/>
            <person name="Fraser A."/>
            <person name="Garcia J.L."/>
            <person name="Garcia M.J."/>
            <person name="Goble A."/>
            <person name="Goldman G.H."/>
            <person name="Gomi K."/>
            <person name="Griffith-Jones S."/>
            <person name="Gwilliam R."/>
            <person name="Haas B.J."/>
            <person name="Haas H."/>
            <person name="Harris D.E."/>
            <person name="Horiuchi H."/>
            <person name="Huang J."/>
            <person name="Humphray S."/>
            <person name="Jimenez J."/>
            <person name="Keller N."/>
            <person name="Khouri H."/>
            <person name="Kitamoto K."/>
            <person name="Kobayashi T."/>
            <person name="Konzack S."/>
            <person name="Kulkarni R."/>
            <person name="Kumagai T."/>
            <person name="Lafton A."/>
            <person name="Latge J.-P."/>
            <person name="Li W."/>
            <person name="Lord A."/>
            <person name="Lu C."/>
            <person name="Majoros W.H."/>
            <person name="May G.S."/>
            <person name="Miller B.L."/>
            <person name="Mohamoud Y."/>
            <person name="Molina M."/>
            <person name="Monod M."/>
            <person name="Mouyna I."/>
            <person name="Mulligan S."/>
            <person name="Murphy L.D."/>
            <person name="O'Neil S."/>
            <person name="Paulsen I."/>
            <person name="Penalva M.A."/>
            <person name="Pertea M."/>
            <person name="Price C."/>
            <person name="Pritchard B.L."/>
            <person name="Quail M.A."/>
            <person name="Rabbinowitsch E."/>
            <person name="Rawlins N."/>
            <person name="Rajandream M.A."/>
            <person name="Reichard U."/>
            <person name="Renauld H."/>
            <person name="Robson G.D."/>
            <person name="Rodriguez de Cordoba S."/>
            <person name="Rodriguez-Pena J.M."/>
            <person name="Ronning C.M."/>
            <person name="Rutter S."/>
            <person name="Salzberg S.L."/>
            <person name="Sanchez M."/>
            <person name="Sanchez-Ferrero J.C."/>
            <person name="Saunders D."/>
            <person name="Seeger K."/>
            <person name="Squares R."/>
            <person name="Squares S."/>
            <person name="Takeuchi M."/>
            <person name="Tekaia F."/>
            <person name="Turner G."/>
            <person name="Vazquez de Aldana C.R."/>
            <person name="Weidman J."/>
            <person name="White O."/>
            <person name="Woodward J.R."/>
            <person name="Yu J.-H."/>
            <person name="Fraser C.M."/>
            <person name="Galagan J.E."/>
            <person name="Asai K."/>
            <person name="Machida M."/>
            <person name="Hall N."/>
            <person name="Barrell B.G."/>
            <person name="Denning D.W."/>
        </authorList>
    </citation>
    <scope>NUCLEOTIDE SEQUENCE [LARGE SCALE GENOMIC DNA]</scope>
    <source>
        <strain>ATCC MYA-4609 / CBS 101355 / FGSC A1100 / Af293</strain>
    </source>
</reference>
<accession>Q4WXY3</accession>
<protein>
    <recommendedName>
        <fullName>Nucleolar protein 9</fullName>
    </recommendedName>
    <alternativeName>
        <fullName>Pumilio domain-containing protein nop9</fullName>
    </alternativeName>
</protein>
<comment type="function">
    <text evidence="1">RNA-binding nucleolar protein required for pre-rRNA processing. Involved in production of 18S rRNA and assembly of small ribosomal subunit (By similarity).</text>
</comment>
<comment type="subcellular location">
    <subcellularLocation>
        <location evidence="1">Nucleus</location>
        <location evidence="1">Nucleolus</location>
    </subcellularLocation>
</comment>
<comment type="similarity">
    <text evidence="3">Belongs to the NOP9 family.</text>
</comment>
<keyword id="KW-0539">Nucleus</keyword>
<keyword id="KW-1185">Reference proteome</keyword>
<keyword id="KW-0677">Repeat</keyword>
<keyword id="KW-0690">Ribosome biogenesis</keyword>
<keyword id="KW-0698">rRNA processing</keyword>
<feature type="chain" id="PRO_0000407799" description="Nucleolar protein 9">
    <location>
        <begin position="1"/>
        <end position="699"/>
    </location>
</feature>
<feature type="repeat" description="Pumilio 1">
    <location>
        <begin position="120"/>
        <end position="155"/>
    </location>
</feature>
<feature type="repeat" description="Pumilio 2">
    <location>
        <begin position="156"/>
        <end position="191"/>
    </location>
</feature>
<feature type="repeat" description="Pumilio 3">
    <location>
        <begin position="361"/>
        <end position="396"/>
    </location>
</feature>
<feature type="repeat" description="Pumilio 4">
    <location>
        <begin position="397"/>
        <end position="433"/>
    </location>
</feature>
<feature type="repeat" description="Pumilio 5">
    <location>
        <begin position="540"/>
        <end position="580"/>
    </location>
</feature>
<feature type="repeat" description="Pumilio 6">
    <location>
        <begin position="582"/>
        <end position="619"/>
    </location>
</feature>
<feature type="region of interest" description="Disordered" evidence="2">
    <location>
        <begin position="1"/>
        <end position="66"/>
    </location>
</feature>
<feature type="region of interest" description="Disordered" evidence="2">
    <location>
        <begin position="491"/>
        <end position="510"/>
    </location>
</feature>
<feature type="compositionally biased region" description="Basic residues" evidence="2">
    <location>
        <begin position="1"/>
        <end position="10"/>
    </location>
</feature>
<feature type="compositionally biased region" description="Basic and acidic residues" evidence="2">
    <location>
        <begin position="11"/>
        <end position="27"/>
    </location>
</feature>
<feature type="compositionally biased region" description="Polar residues" evidence="2">
    <location>
        <begin position="41"/>
        <end position="50"/>
    </location>
</feature>
<proteinExistence type="inferred from homology"/>
<dbReference type="EMBL" id="AAHF01000002">
    <property type="protein sequence ID" value="EAL92470.1"/>
    <property type="molecule type" value="Genomic_DNA"/>
</dbReference>
<dbReference type="RefSeq" id="XP_754508.1">
    <property type="nucleotide sequence ID" value="XM_749415.1"/>
</dbReference>
<dbReference type="SMR" id="Q4WXY3"/>
<dbReference type="FunCoup" id="Q4WXY3">
    <property type="interactions" value="906"/>
</dbReference>
<dbReference type="STRING" id="330879.Q4WXY3"/>
<dbReference type="EnsemblFungi" id="EAL92470">
    <property type="protein sequence ID" value="EAL92470"/>
    <property type="gene ID" value="AFUA_3G11110"/>
</dbReference>
<dbReference type="GeneID" id="3512084"/>
<dbReference type="KEGG" id="afm:AFUA_3G11110"/>
<dbReference type="VEuPathDB" id="FungiDB:Afu3g11110"/>
<dbReference type="eggNOG" id="KOG2188">
    <property type="taxonomic scope" value="Eukaryota"/>
</dbReference>
<dbReference type="HOGENOM" id="CLU_008720_1_1_1"/>
<dbReference type="InParanoid" id="Q4WXY3"/>
<dbReference type="OMA" id="HHLVRNF"/>
<dbReference type="OrthoDB" id="392571at2759"/>
<dbReference type="Proteomes" id="UP000002530">
    <property type="component" value="Chromosome 3"/>
</dbReference>
<dbReference type="GO" id="GO:0030686">
    <property type="term" value="C:90S preribosome"/>
    <property type="evidence" value="ECO:0000318"/>
    <property type="project" value="GO_Central"/>
</dbReference>
<dbReference type="GO" id="GO:0005730">
    <property type="term" value="C:nucleolus"/>
    <property type="evidence" value="ECO:0000318"/>
    <property type="project" value="GO_Central"/>
</dbReference>
<dbReference type="GO" id="GO:0030688">
    <property type="term" value="C:preribosome, small subunit precursor"/>
    <property type="evidence" value="ECO:0000318"/>
    <property type="project" value="GO_Central"/>
</dbReference>
<dbReference type="GO" id="GO:0003723">
    <property type="term" value="F:RNA binding"/>
    <property type="evidence" value="ECO:0000318"/>
    <property type="project" value="GO_Central"/>
</dbReference>
<dbReference type="GO" id="GO:0000480">
    <property type="term" value="P:endonucleolytic cleavage in 5'-ETS of tricistronic rRNA transcript (SSU-rRNA, 5.8S rRNA, LSU-rRNA)"/>
    <property type="evidence" value="ECO:0000318"/>
    <property type="project" value="GO_Central"/>
</dbReference>
<dbReference type="GO" id="GO:0000447">
    <property type="term" value="P:endonucleolytic cleavage in ITS1 to separate SSU-rRNA from 5.8S rRNA and LSU-rRNA from tricistronic rRNA transcript (SSU-rRNA, 5.8S rRNA, LSU-rRNA)"/>
    <property type="evidence" value="ECO:0000318"/>
    <property type="project" value="GO_Central"/>
</dbReference>
<dbReference type="GO" id="GO:0000472">
    <property type="term" value="P:endonucleolytic cleavage to generate mature 5'-end of SSU-rRNA from (SSU-rRNA, 5.8S rRNA, LSU-rRNA)"/>
    <property type="evidence" value="ECO:0000318"/>
    <property type="project" value="GO_Central"/>
</dbReference>
<dbReference type="GO" id="GO:0000056">
    <property type="term" value="P:ribosomal small subunit export from nucleus"/>
    <property type="evidence" value="ECO:0000318"/>
    <property type="project" value="GO_Central"/>
</dbReference>
<dbReference type="Gene3D" id="1.25.10.10">
    <property type="entry name" value="Leucine-rich Repeat Variant"/>
    <property type="match status" value="2"/>
</dbReference>
<dbReference type="InterPro" id="IPR011989">
    <property type="entry name" value="ARM-like"/>
</dbReference>
<dbReference type="InterPro" id="IPR016024">
    <property type="entry name" value="ARM-type_fold"/>
</dbReference>
<dbReference type="InterPro" id="IPR040000">
    <property type="entry name" value="NOP9"/>
</dbReference>
<dbReference type="InterPro" id="IPR001313">
    <property type="entry name" value="Pumilio_RNA-bd_rpt"/>
</dbReference>
<dbReference type="PANTHER" id="PTHR13102">
    <property type="entry name" value="NUCLEOLAR PROTEIN 9"/>
    <property type="match status" value="1"/>
</dbReference>
<dbReference type="PANTHER" id="PTHR13102:SF0">
    <property type="entry name" value="NUCLEOLAR PROTEIN 9"/>
    <property type="match status" value="1"/>
</dbReference>
<dbReference type="Pfam" id="PF22493">
    <property type="entry name" value="PUF_NOP9"/>
    <property type="match status" value="1"/>
</dbReference>
<dbReference type="SMART" id="SM00025">
    <property type="entry name" value="Pumilio"/>
    <property type="match status" value="5"/>
</dbReference>
<dbReference type="SUPFAM" id="SSF48371">
    <property type="entry name" value="ARM repeat"/>
    <property type="match status" value="1"/>
</dbReference>
<name>NOP9_ASPFU</name>
<evidence type="ECO:0000250" key="1"/>
<evidence type="ECO:0000256" key="2">
    <source>
        <dbReference type="SAM" id="MobiDB-lite"/>
    </source>
</evidence>
<evidence type="ECO:0000305" key="3"/>
<gene>
    <name type="primary">nop9</name>
    <name type="ORF">AFUA_3G11110</name>
</gene>